<reference key="1">
    <citation type="submission" date="2008-05" db="EMBL/GenBank/DDBJ databases">
        <title>Complete sequence of chromosome 1 of Ralstonia pickettii 12J.</title>
        <authorList>
            <person name="Lucas S."/>
            <person name="Copeland A."/>
            <person name="Lapidus A."/>
            <person name="Glavina del Rio T."/>
            <person name="Dalin E."/>
            <person name="Tice H."/>
            <person name="Bruce D."/>
            <person name="Goodwin L."/>
            <person name="Pitluck S."/>
            <person name="Meincke L."/>
            <person name="Brettin T."/>
            <person name="Detter J.C."/>
            <person name="Han C."/>
            <person name="Kuske C.R."/>
            <person name="Schmutz J."/>
            <person name="Larimer F."/>
            <person name="Land M."/>
            <person name="Hauser L."/>
            <person name="Kyrpides N."/>
            <person name="Mikhailova N."/>
            <person name="Marsh T."/>
            <person name="Richardson P."/>
        </authorList>
    </citation>
    <scope>NUCLEOTIDE SEQUENCE [LARGE SCALE GENOMIC DNA]</scope>
    <source>
        <strain>12J</strain>
    </source>
</reference>
<comment type="function">
    <text evidence="1">Catalyzes the ferrous insertion into protoporphyrin IX.</text>
</comment>
<comment type="catalytic activity">
    <reaction evidence="1">
        <text>heme b + 2 H(+) = protoporphyrin IX + Fe(2+)</text>
        <dbReference type="Rhea" id="RHEA:22584"/>
        <dbReference type="ChEBI" id="CHEBI:15378"/>
        <dbReference type="ChEBI" id="CHEBI:29033"/>
        <dbReference type="ChEBI" id="CHEBI:57306"/>
        <dbReference type="ChEBI" id="CHEBI:60344"/>
        <dbReference type="EC" id="4.98.1.1"/>
    </reaction>
</comment>
<comment type="pathway">
    <text evidence="1">Porphyrin-containing compound metabolism; protoheme biosynthesis; protoheme from protoporphyrin-IX: step 1/1.</text>
</comment>
<comment type="subcellular location">
    <subcellularLocation>
        <location evidence="1">Cytoplasm</location>
    </subcellularLocation>
</comment>
<comment type="similarity">
    <text evidence="1">Belongs to the ferrochelatase family.</text>
</comment>
<sequence>MPFLPEPLFQHGQPDRTAILLVNLGTPDGTSPREVGRYLRQFLSDPRVVEIPRAVWWFILNVLIVPLRSRASAHKYESIWLREANMTGSPLLVYSERQAHALQQLLNAQGHDVVVACAMRYGNPSIPSVMQALRKQGVERILVLPMYPQYSGTTTATAFDEVFRVLGEMRNQPELRLVKHFHDDPAYINALHQQVGAYWAQHGAPDFAHGDKLVLSFHGVPRRTLELGDPYHCECLKTGRLLGEALGLQPGQYLVTFQSRFGRAEWLQPYTAPTLEELGRVGTNRVDVFCPGFPADCLETLEEIAMEGQSTFRVAGGKEFHYIPCLNDSEAWIAGIADIALAHLQGWPLTLTHPHVLEASRTRAQSKGAAA</sequence>
<organism>
    <name type="scientific">Ralstonia pickettii (strain 12J)</name>
    <dbReference type="NCBI Taxonomy" id="402626"/>
    <lineage>
        <taxon>Bacteria</taxon>
        <taxon>Pseudomonadati</taxon>
        <taxon>Pseudomonadota</taxon>
        <taxon>Betaproteobacteria</taxon>
        <taxon>Burkholderiales</taxon>
        <taxon>Burkholderiaceae</taxon>
        <taxon>Ralstonia</taxon>
    </lineage>
</organism>
<feature type="chain" id="PRO_1000116069" description="Ferrochelatase">
    <location>
        <begin position="1"/>
        <end position="371"/>
    </location>
</feature>
<feature type="binding site" evidence="1">
    <location>
        <position position="218"/>
    </location>
    <ligand>
        <name>Fe cation</name>
        <dbReference type="ChEBI" id="CHEBI:24875"/>
    </ligand>
</feature>
<feature type="binding site" evidence="1">
    <location>
        <position position="299"/>
    </location>
    <ligand>
        <name>Fe cation</name>
        <dbReference type="ChEBI" id="CHEBI:24875"/>
    </ligand>
</feature>
<protein>
    <recommendedName>
        <fullName evidence="1">Ferrochelatase</fullName>
        <ecNumber evidence="1">4.98.1.1</ecNumber>
    </recommendedName>
    <alternativeName>
        <fullName evidence="1">Heme synthase</fullName>
    </alternativeName>
    <alternativeName>
        <fullName evidence="1">Protoheme ferro-lyase</fullName>
    </alternativeName>
</protein>
<evidence type="ECO:0000255" key="1">
    <source>
        <dbReference type="HAMAP-Rule" id="MF_00323"/>
    </source>
</evidence>
<keyword id="KW-0963">Cytoplasm</keyword>
<keyword id="KW-0350">Heme biosynthesis</keyword>
<keyword id="KW-0408">Iron</keyword>
<keyword id="KW-0456">Lyase</keyword>
<keyword id="KW-0479">Metal-binding</keyword>
<keyword id="KW-0627">Porphyrin biosynthesis</keyword>
<dbReference type="EC" id="4.98.1.1" evidence="1"/>
<dbReference type="EMBL" id="CP001068">
    <property type="protein sequence ID" value="ACD28000.1"/>
    <property type="molecule type" value="Genomic_DNA"/>
</dbReference>
<dbReference type="SMR" id="B2UBQ0"/>
<dbReference type="STRING" id="402626.Rpic_2877"/>
<dbReference type="KEGG" id="rpi:Rpic_2877"/>
<dbReference type="eggNOG" id="COG0276">
    <property type="taxonomic scope" value="Bacteria"/>
</dbReference>
<dbReference type="HOGENOM" id="CLU_018884_0_0_4"/>
<dbReference type="UniPathway" id="UPA00252">
    <property type="reaction ID" value="UER00325"/>
</dbReference>
<dbReference type="GO" id="GO:0005737">
    <property type="term" value="C:cytoplasm"/>
    <property type="evidence" value="ECO:0007669"/>
    <property type="project" value="UniProtKB-SubCell"/>
</dbReference>
<dbReference type="GO" id="GO:0004325">
    <property type="term" value="F:ferrochelatase activity"/>
    <property type="evidence" value="ECO:0007669"/>
    <property type="project" value="UniProtKB-UniRule"/>
</dbReference>
<dbReference type="GO" id="GO:0046872">
    <property type="term" value="F:metal ion binding"/>
    <property type="evidence" value="ECO:0007669"/>
    <property type="project" value="UniProtKB-KW"/>
</dbReference>
<dbReference type="GO" id="GO:0006783">
    <property type="term" value="P:heme biosynthetic process"/>
    <property type="evidence" value="ECO:0007669"/>
    <property type="project" value="UniProtKB-UniRule"/>
</dbReference>
<dbReference type="CDD" id="cd00419">
    <property type="entry name" value="Ferrochelatase_C"/>
    <property type="match status" value="1"/>
</dbReference>
<dbReference type="CDD" id="cd03411">
    <property type="entry name" value="Ferrochelatase_N"/>
    <property type="match status" value="1"/>
</dbReference>
<dbReference type="FunFam" id="3.40.50.1400:FF:000002">
    <property type="entry name" value="Ferrochelatase"/>
    <property type="match status" value="1"/>
</dbReference>
<dbReference type="Gene3D" id="3.40.50.1400">
    <property type="match status" value="2"/>
</dbReference>
<dbReference type="HAMAP" id="MF_00323">
    <property type="entry name" value="Ferrochelatase"/>
    <property type="match status" value="1"/>
</dbReference>
<dbReference type="InterPro" id="IPR001015">
    <property type="entry name" value="Ferrochelatase"/>
</dbReference>
<dbReference type="InterPro" id="IPR019772">
    <property type="entry name" value="Ferrochelatase_AS"/>
</dbReference>
<dbReference type="InterPro" id="IPR033644">
    <property type="entry name" value="Ferrochelatase_C"/>
</dbReference>
<dbReference type="InterPro" id="IPR033659">
    <property type="entry name" value="Ferrochelatase_N"/>
</dbReference>
<dbReference type="NCBIfam" id="TIGR00109">
    <property type="entry name" value="hemH"/>
    <property type="match status" value="1"/>
</dbReference>
<dbReference type="PANTHER" id="PTHR11108">
    <property type="entry name" value="FERROCHELATASE"/>
    <property type="match status" value="1"/>
</dbReference>
<dbReference type="PANTHER" id="PTHR11108:SF1">
    <property type="entry name" value="FERROCHELATASE, MITOCHONDRIAL"/>
    <property type="match status" value="1"/>
</dbReference>
<dbReference type="Pfam" id="PF00762">
    <property type="entry name" value="Ferrochelatase"/>
    <property type="match status" value="1"/>
</dbReference>
<dbReference type="SUPFAM" id="SSF53800">
    <property type="entry name" value="Chelatase"/>
    <property type="match status" value="1"/>
</dbReference>
<dbReference type="PROSITE" id="PS00534">
    <property type="entry name" value="FERROCHELATASE"/>
    <property type="match status" value="1"/>
</dbReference>
<accession>B2UBQ0</accession>
<name>HEMH_RALPJ</name>
<gene>
    <name evidence="1" type="primary">hemH</name>
    <name type="ordered locus">Rpic_2877</name>
</gene>
<proteinExistence type="inferred from homology"/>